<protein>
    <recommendedName>
        <fullName evidence="1">Exodeoxyribonuclease 7 large subunit</fullName>
        <ecNumber evidence="1">3.1.11.6</ecNumber>
    </recommendedName>
    <alternativeName>
        <fullName evidence="1">Exodeoxyribonuclease VII large subunit</fullName>
        <shortName evidence="1">Exonuclease VII large subunit</shortName>
    </alternativeName>
</protein>
<accession>B0BZ38</accession>
<evidence type="ECO:0000255" key="1">
    <source>
        <dbReference type="HAMAP-Rule" id="MF_00378"/>
    </source>
</evidence>
<reference key="1">
    <citation type="journal article" date="2008" name="Proc. Natl. Acad. Sci. U.S.A.">
        <title>Niche adaptation and genome expansion in the chlorophyll d-producing cyanobacterium Acaryochloris marina.</title>
        <authorList>
            <person name="Swingley W.D."/>
            <person name="Chen M."/>
            <person name="Cheung P.C."/>
            <person name="Conrad A.L."/>
            <person name="Dejesa L.C."/>
            <person name="Hao J."/>
            <person name="Honchak B.M."/>
            <person name="Karbach L.E."/>
            <person name="Kurdoglu A."/>
            <person name="Lahiri S."/>
            <person name="Mastrian S.D."/>
            <person name="Miyashita H."/>
            <person name="Page L."/>
            <person name="Ramakrishna P."/>
            <person name="Satoh S."/>
            <person name="Sattley W.M."/>
            <person name="Shimada Y."/>
            <person name="Taylor H.L."/>
            <person name="Tomo T."/>
            <person name="Tsuchiya T."/>
            <person name="Wang Z.T."/>
            <person name="Raymond J."/>
            <person name="Mimuro M."/>
            <person name="Blankenship R.E."/>
            <person name="Touchman J.W."/>
        </authorList>
    </citation>
    <scope>NUCLEOTIDE SEQUENCE [LARGE SCALE GENOMIC DNA]</scope>
    <source>
        <strain>MBIC 11017</strain>
    </source>
</reference>
<sequence>MTSYQPNLLVPPEVLSVKGLTDYIQTLLEDDSYLVQVWVEGEVSSAARHRSGFFFTLQDQQEAASIHCVIWNSYCDQLVIEPEVGEQILALGRIRVYPQRGQYQLMAWQLFPAGEGLRSLRYQQLRERLTREGLFDPLQKQALPTYPQTVGVVTSHQAAAWGDIKRTLKAQHPGLKVLFSPTKVQGKQAPEAIVLAIERVIKDGRAEVLIVARGGGATEDLACFNDERVVRAIAECPIPVISGIGHQRDETLADLVADVCAHTPTAAAECIPRLTDWQTDYRNCIARLYIILTRQLDVAHEHLLYQKTRLRRLQIDRQFEREQVLRSRLQNHLLHAIKHRLGQAQQHQQLLQQQLTSLDPTQVLKRGYALVQTTDQQIVRSTQQLQVDQELKVELAEGHFTARVTALQSSPQEADDER</sequence>
<keyword id="KW-0963">Cytoplasm</keyword>
<keyword id="KW-0269">Exonuclease</keyword>
<keyword id="KW-0378">Hydrolase</keyword>
<keyword id="KW-0540">Nuclease</keyword>
<keyword id="KW-1185">Reference proteome</keyword>
<name>EX7L_ACAM1</name>
<organism>
    <name type="scientific">Acaryochloris marina (strain MBIC 11017)</name>
    <dbReference type="NCBI Taxonomy" id="329726"/>
    <lineage>
        <taxon>Bacteria</taxon>
        <taxon>Bacillati</taxon>
        <taxon>Cyanobacteriota</taxon>
        <taxon>Cyanophyceae</taxon>
        <taxon>Acaryochloridales</taxon>
        <taxon>Acaryochloridaceae</taxon>
        <taxon>Acaryochloris</taxon>
    </lineage>
</organism>
<gene>
    <name evidence="1" type="primary">xseA</name>
    <name type="ordered locus">AM1_3344</name>
</gene>
<dbReference type="EC" id="3.1.11.6" evidence="1"/>
<dbReference type="EMBL" id="CP000828">
    <property type="protein sequence ID" value="ABW28338.1"/>
    <property type="molecule type" value="Genomic_DNA"/>
</dbReference>
<dbReference type="RefSeq" id="WP_012163740.1">
    <property type="nucleotide sequence ID" value="NC_009925.1"/>
</dbReference>
<dbReference type="SMR" id="B0BZ38"/>
<dbReference type="STRING" id="329726.AM1_3344"/>
<dbReference type="KEGG" id="amr:AM1_3344"/>
<dbReference type="eggNOG" id="COG1570">
    <property type="taxonomic scope" value="Bacteria"/>
</dbReference>
<dbReference type="HOGENOM" id="CLU_023625_3_1_3"/>
<dbReference type="OrthoDB" id="9802795at2"/>
<dbReference type="Proteomes" id="UP000000268">
    <property type="component" value="Chromosome"/>
</dbReference>
<dbReference type="GO" id="GO:0005737">
    <property type="term" value="C:cytoplasm"/>
    <property type="evidence" value="ECO:0007669"/>
    <property type="project" value="UniProtKB-SubCell"/>
</dbReference>
<dbReference type="GO" id="GO:0009318">
    <property type="term" value="C:exodeoxyribonuclease VII complex"/>
    <property type="evidence" value="ECO:0007669"/>
    <property type="project" value="InterPro"/>
</dbReference>
<dbReference type="GO" id="GO:0008855">
    <property type="term" value="F:exodeoxyribonuclease VII activity"/>
    <property type="evidence" value="ECO:0007669"/>
    <property type="project" value="UniProtKB-UniRule"/>
</dbReference>
<dbReference type="GO" id="GO:0003676">
    <property type="term" value="F:nucleic acid binding"/>
    <property type="evidence" value="ECO:0007669"/>
    <property type="project" value="InterPro"/>
</dbReference>
<dbReference type="GO" id="GO:0006308">
    <property type="term" value="P:DNA catabolic process"/>
    <property type="evidence" value="ECO:0007669"/>
    <property type="project" value="UniProtKB-UniRule"/>
</dbReference>
<dbReference type="CDD" id="cd04489">
    <property type="entry name" value="ExoVII_LU_OBF"/>
    <property type="match status" value="1"/>
</dbReference>
<dbReference type="HAMAP" id="MF_00378">
    <property type="entry name" value="Exonuc_7_L"/>
    <property type="match status" value="1"/>
</dbReference>
<dbReference type="InterPro" id="IPR003753">
    <property type="entry name" value="Exonuc_VII_L"/>
</dbReference>
<dbReference type="InterPro" id="IPR020579">
    <property type="entry name" value="Exonuc_VII_lsu_C"/>
</dbReference>
<dbReference type="InterPro" id="IPR025824">
    <property type="entry name" value="OB-fold_nuc-bd_dom"/>
</dbReference>
<dbReference type="NCBIfam" id="TIGR00237">
    <property type="entry name" value="xseA"/>
    <property type="match status" value="1"/>
</dbReference>
<dbReference type="PANTHER" id="PTHR30008">
    <property type="entry name" value="EXODEOXYRIBONUCLEASE 7 LARGE SUBUNIT"/>
    <property type="match status" value="1"/>
</dbReference>
<dbReference type="PANTHER" id="PTHR30008:SF0">
    <property type="entry name" value="EXODEOXYRIBONUCLEASE 7 LARGE SUBUNIT"/>
    <property type="match status" value="1"/>
</dbReference>
<dbReference type="Pfam" id="PF02601">
    <property type="entry name" value="Exonuc_VII_L"/>
    <property type="match status" value="2"/>
</dbReference>
<dbReference type="Pfam" id="PF13742">
    <property type="entry name" value="tRNA_anti_2"/>
    <property type="match status" value="1"/>
</dbReference>
<feature type="chain" id="PRO_1000079970" description="Exodeoxyribonuclease 7 large subunit">
    <location>
        <begin position="1"/>
        <end position="418"/>
    </location>
</feature>
<comment type="function">
    <text evidence="1">Bidirectionally degrades single-stranded DNA into large acid-insoluble oligonucleotides, which are then degraded further into small acid-soluble oligonucleotides.</text>
</comment>
<comment type="catalytic activity">
    <reaction evidence="1">
        <text>Exonucleolytic cleavage in either 5'- to 3'- or 3'- to 5'-direction to yield nucleoside 5'-phosphates.</text>
        <dbReference type="EC" id="3.1.11.6"/>
    </reaction>
</comment>
<comment type="subunit">
    <text evidence="1">Heterooligomer composed of large and small subunits.</text>
</comment>
<comment type="subcellular location">
    <subcellularLocation>
        <location evidence="1">Cytoplasm</location>
    </subcellularLocation>
</comment>
<comment type="similarity">
    <text evidence="1">Belongs to the XseA family.</text>
</comment>
<proteinExistence type="inferred from homology"/>